<organism>
    <name type="scientific">Vibrio parahaemolyticus serotype O3:K6 (strain RIMD 2210633)</name>
    <dbReference type="NCBI Taxonomy" id="223926"/>
    <lineage>
        <taxon>Bacteria</taxon>
        <taxon>Pseudomonadati</taxon>
        <taxon>Pseudomonadota</taxon>
        <taxon>Gammaproteobacteria</taxon>
        <taxon>Vibrionales</taxon>
        <taxon>Vibrionaceae</taxon>
        <taxon>Vibrio</taxon>
    </lineage>
</organism>
<dbReference type="EC" id="1.1.1.38" evidence="1"/>
<dbReference type="EMBL" id="BA000031">
    <property type="protein sequence ID" value="BAC59521.1"/>
    <property type="molecule type" value="Genomic_DNA"/>
</dbReference>
<dbReference type="RefSeq" id="NP_797637.1">
    <property type="nucleotide sequence ID" value="NC_004603.1"/>
</dbReference>
<dbReference type="RefSeq" id="WP_005462599.1">
    <property type="nucleotide sequence ID" value="NC_004603.1"/>
</dbReference>
<dbReference type="SMR" id="Q87Q92"/>
<dbReference type="GeneID" id="1188763"/>
<dbReference type="KEGG" id="vpa:VP1258"/>
<dbReference type="PATRIC" id="fig|223926.6.peg.1198"/>
<dbReference type="eggNOG" id="COG0281">
    <property type="taxonomic scope" value="Bacteria"/>
</dbReference>
<dbReference type="HOGENOM" id="CLU_011405_5_2_6"/>
<dbReference type="Proteomes" id="UP000002493">
    <property type="component" value="Chromosome 1"/>
</dbReference>
<dbReference type="GO" id="GO:0005829">
    <property type="term" value="C:cytosol"/>
    <property type="evidence" value="ECO:0007669"/>
    <property type="project" value="TreeGrafter"/>
</dbReference>
<dbReference type="GO" id="GO:0004471">
    <property type="term" value="F:malate dehydrogenase (decarboxylating) (NAD+) activity"/>
    <property type="evidence" value="ECO:0007669"/>
    <property type="project" value="UniProtKB-UniRule"/>
</dbReference>
<dbReference type="GO" id="GO:0046872">
    <property type="term" value="F:metal ion binding"/>
    <property type="evidence" value="ECO:0007669"/>
    <property type="project" value="UniProtKB-KW"/>
</dbReference>
<dbReference type="GO" id="GO:0051287">
    <property type="term" value="F:NAD binding"/>
    <property type="evidence" value="ECO:0007669"/>
    <property type="project" value="InterPro"/>
</dbReference>
<dbReference type="GO" id="GO:0008948">
    <property type="term" value="F:oxaloacetate decarboxylase activity"/>
    <property type="evidence" value="ECO:0007669"/>
    <property type="project" value="UniProtKB-UniRule"/>
</dbReference>
<dbReference type="GO" id="GO:0006108">
    <property type="term" value="P:malate metabolic process"/>
    <property type="evidence" value="ECO:0007669"/>
    <property type="project" value="TreeGrafter"/>
</dbReference>
<dbReference type="CDD" id="cd05312">
    <property type="entry name" value="NAD_bind_1_malic_enz"/>
    <property type="match status" value="1"/>
</dbReference>
<dbReference type="FunFam" id="3.40.50.10380:FF:000001">
    <property type="entry name" value="NAD-dependent malic enzyme"/>
    <property type="match status" value="1"/>
</dbReference>
<dbReference type="FunFam" id="3.40.50.720:FF:000055">
    <property type="entry name" value="NAD-dependent malic enzyme"/>
    <property type="match status" value="1"/>
</dbReference>
<dbReference type="Gene3D" id="3.40.50.10380">
    <property type="entry name" value="Malic enzyme, N-terminal domain"/>
    <property type="match status" value="1"/>
</dbReference>
<dbReference type="Gene3D" id="3.40.50.720">
    <property type="entry name" value="NAD(P)-binding Rossmann-like Domain"/>
    <property type="match status" value="1"/>
</dbReference>
<dbReference type="HAMAP" id="MF_01619">
    <property type="entry name" value="NAD_malic_enz"/>
    <property type="match status" value="1"/>
</dbReference>
<dbReference type="InterPro" id="IPR046346">
    <property type="entry name" value="Aminoacid_DH-like_N_sf"/>
</dbReference>
<dbReference type="InterPro" id="IPR015884">
    <property type="entry name" value="Malic_enzyme_CS"/>
</dbReference>
<dbReference type="InterPro" id="IPR012301">
    <property type="entry name" value="Malic_N_dom"/>
</dbReference>
<dbReference type="InterPro" id="IPR037062">
    <property type="entry name" value="Malic_N_dom_sf"/>
</dbReference>
<dbReference type="InterPro" id="IPR012302">
    <property type="entry name" value="Malic_NAD-bd"/>
</dbReference>
<dbReference type="InterPro" id="IPR001891">
    <property type="entry name" value="Malic_OxRdtase"/>
</dbReference>
<dbReference type="InterPro" id="IPR036291">
    <property type="entry name" value="NAD(P)-bd_dom_sf"/>
</dbReference>
<dbReference type="InterPro" id="IPR023667">
    <property type="entry name" value="NAD_malic_enz_proteobac"/>
</dbReference>
<dbReference type="NCBIfam" id="NF010052">
    <property type="entry name" value="PRK13529.1"/>
    <property type="match status" value="1"/>
</dbReference>
<dbReference type="PANTHER" id="PTHR23406">
    <property type="entry name" value="MALIC ENZYME-RELATED"/>
    <property type="match status" value="1"/>
</dbReference>
<dbReference type="PANTHER" id="PTHR23406:SF34">
    <property type="entry name" value="NAD-DEPENDENT MALIC ENZYME, MITOCHONDRIAL"/>
    <property type="match status" value="1"/>
</dbReference>
<dbReference type="Pfam" id="PF00390">
    <property type="entry name" value="malic"/>
    <property type="match status" value="1"/>
</dbReference>
<dbReference type="Pfam" id="PF03949">
    <property type="entry name" value="Malic_M"/>
    <property type="match status" value="1"/>
</dbReference>
<dbReference type="PIRSF" id="PIRSF000106">
    <property type="entry name" value="ME"/>
    <property type="match status" value="1"/>
</dbReference>
<dbReference type="PRINTS" id="PR00072">
    <property type="entry name" value="MALOXRDTASE"/>
</dbReference>
<dbReference type="SMART" id="SM01274">
    <property type="entry name" value="malic"/>
    <property type="match status" value="1"/>
</dbReference>
<dbReference type="SMART" id="SM00919">
    <property type="entry name" value="Malic_M"/>
    <property type="match status" value="1"/>
</dbReference>
<dbReference type="SUPFAM" id="SSF53223">
    <property type="entry name" value="Aminoacid dehydrogenase-like, N-terminal domain"/>
    <property type="match status" value="1"/>
</dbReference>
<dbReference type="SUPFAM" id="SSF51735">
    <property type="entry name" value="NAD(P)-binding Rossmann-fold domains"/>
    <property type="match status" value="1"/>
</dbReference>
<dbReference type="PROSITE" id="PS00331">
    <property type="entry name" value="MALIC_ENZYMES"/>
    <property type="match status" value="1"/>
</dbReference>
<sequence length="562" mass="62299">MNNDKRPLYIPYAGPALMATPLLNKGSAFSAEERSSFNLEGLLPETTETIQEQVERAYQQYKSFESDMDKHIYLRNIQDTNETLFYRLVQNHISEMMPIIYTPTVGAACENFSNIYRRGRGLFISYPNRDRIDDLLNNAANHNVKVIVVTDGERILGLGDQGIGGMGIPIGKLSLYTACGGISPAYTLPIVLDVGTNNPQRLADPMYMGWRHPRITGPDYDAFVEEFIQAVQRRWPDALIQFEDFAQKNAMPLLERYKDRICCFNDDIQGTAAVTVGSLLAACKAAGTQLSKQRITFLGAGSAGCGIAEAIIAQMVSEGISDEKARSQVYMVDRWGLLQEGMPNLLDFQQRLVQKHSNTKEWENEGNGFSLLDVMRNAKPTVLIGVSGAPGLFSQEVIEEMHKHCKRPIVFPLSNPTSRVEATPNDIIRWTNGEALVATGSPFDPVVHEGRTYPIAQCNNSYIFPGIGLGVLAVNAKRVTDEMLMESSRALATCSPLAINGRGALLPPLEEIHLVSKKIAFAVAKKAIEQGVALEITDEALNDAIDQAFWQPVYRRYKRTAF</sequence>
<evidence type="ECO:0000255" key="1">
    <source>
        <dbReference type="HAMAP-Rule" id="MF_01619"/>
    </source>
</evidence>
<gene>
    <name evidence="1" type="primary">maeA</name>
    <name type="ordered locus">VP1258</name>
</gene>
<feature type="chain" id="PRO_0000160236" description="NAD-dependent malic enzyme">
    <location>
        <begin position="1"/>
        <end position="562"/>
    </location>
</feature>
<feature type="active site" description="Proton donor" evidence="1">
    <location>
        <position position="101"/>
    </location>
</feature>
<feature type="active site" description="Proton acceptor" evidence="1">
    <location>
        <position position="172"/>
    </location>
</feature>
<feature type="binding site" evidence="1">
    <location>
        <position position="154"/>
    </location>
    <ligand>
        <name>NAD(+)</name>
        <dbReference type="ChEBI" id="CHEBI:57540"/>
    </ligand>
</feature>
<feature type="binding site" evidence="1">
    <location>
        <position position="243"/>
    </location>
    <ligand>
        <name>a divalent metal cation</name>
        <dbReference type="ChEBI" id="CHEBI:60240"/>
    </ligand>
</feature>
<feature type="binding site" evidence="1">
    <location>
        <position position="244"/>
    </location>
    <ligand>
        <name>a divalent metal cation</name>
        <dbReference type="ChEBI" id="CHEBI:60240"/>
    </ligand>
</feature>
<feature type="binding site" evidence="1">
    <location>
        <position position="267"/>
    </location>
    <ligand>
        <name>a divalent metal cation</name>
        <dbReference type="ChEBI" id="CHEBI:60240"/>
    </ligand>
</feature>
<feature type="binding site" evidence="1">
    <location>
        <position position="267"/>
    </location>
    <ligand>
        <name>NAD(+)</name>
        <dbReference type="ChEBI" id="CHEBI:57540"/>
    </ligand>
</feature>
<feature type="binding site" evidence="1">
    <location>
        <position position="415"/>
    </location>
    <ligand>
        <name>NAD(+)</name>
        <dbReference type="ChEBI" id="CHEBI:57540"/>
    </ligand>
</feature>
<feature type="site" description="Important for activity" evidence="1">
    <location>
        <position position="267"/>
    </location>
</feature>
<name>MAO1_VIBPA</name>
<keyword id="KW-0479">Metal-binding</keyword>
<keyword id="KW-0520">NAD</keyword>
<keyword id="KW-0560">Oxidoreductase</keyword>
<comment type="catalytic activity">
    <reaction evidence="1">
        <text>(S)-malate + NAD(+) = pyruvate + CO2 + NADH</text>
        <dbReference type="Rhea" id="RHEA:12653"/>
        <dbReference type="ChEBI" id="CHEBI:15361"/>
        <dbReference type="ChEBI" id="CHEBI:15589"/>
        <dbReference type="ChEBI" id="CHEBI:16526"/>
        <dbReference type="ChEBI" id="CHEBI:57540"/>
        <dbReference type="ChEBI" id="CHEBI:57945"/>
        <dbReference type="EC" id="1.1.1.38"/>
    </reaction>
</comment>
<comment type="catalytic activity">
    <reaction evidence="1">
        <text>oxaloacetate + H(+) = pyruvate + CO2</text>
        <dbReference type="Rhea" id="RHEA:15641"/>
        <dbReference type="ChEBI" id="CHEBI:15361"/>
        <dbReference type="ChEBI" id="CHEBI:15378"/>
        <dbReference type="ChEBI" id="CHEBI:16452"/>
        <dbReference type="ChEBI" id="CHEBI:16526"/>
        <dbReference type="EC" id="1.1.1.38"/>
    </reaction>
</comment>
<comment type="cofactor">
    <cofactor evidence="1">
        <name>Mg(2+)</name>
        <dbReference type="ChEBI" id="CHEBI:18420"/>
    </cofactor>
    <cofactor evidence="1">
        <name>Mn(2+)</name>
        <dbReference type="ChEBI" id="CHEBI:29035"/>
    </cofactor>
    <text evidence="1">Divalent metal cations. Prefers magnesium or manganese.</text>
</comment>
<comment type="subunit">
    <text evidence="1">Homotetramer.</text>
</comment>
<comment type="similarity">
    <text evidence="1">Belongs to the malic enzymes family.</text>
</comment>
<reference key="1">
    <citation type="journal article" date="2003" name="Lancet">
        <title>Genome sequence of Vibrio parahaemolyticus: a pathogenic mechanism distinct from that of V. cholerae.</title>
        <authorList>
            <person name="Makino K."/>
            <person name="Oshima K."/>
            <person name="Kurokawa K."/>
            <person name="Yokoyama K."/>
            <person name="Uda T."/>
            <person name="Tagomori K."/>
            <person name="Iijima Y."/>
            <person name="Najima M."/>
            <person name="Nakano M."/>
            <person name="Yamashita A."/>
            <person name="Kubota Y."/>
            <person name="Kimura S."/>
            <person name="Yasunaga T."/>
            <person name="Honda T."/>
            <person name="Shinagawa H."/>
            <person name="Hattori M."/>
            <person name="Iida T."/>
        </authorList>
    </citation>
    <scope>NUCLEOTIDE SEQUENCE [LARGE SCALE GENOMIC DNA]</scope>
    <source>
        <strain>RIMD 2210633</strain>
    </source>
</reference>
<accession>Q87Q92</accession>
<protein>
    <recommendedName>
        <fullName evidence="1">NAD-dependent malic enzyme</fullName>
        <shortName evidence="1">NAD-ME</shortName>
        <ecNumber evidence="1">1.1.1.38</ecNumber>
    </recommendedName>
</protein>
<proteinExistence type="inferred from homology"/>